<keyword id="KW-0002">3D-structure</keyword>
<keyword id="KW-0025">Alternative splicing</keyword>
<keyword id="KW-0131">Cell cycle</keyword>
<keyword id="KW-0132">Cell division</keyword>
<keyword id="KW-0137">Centromere</keyword>
<keyword id="KW-0158">Chromosome</keyword>
<keyword id="KW-0159">Chromosome partition</keyword>
<keyword id="KW-0175">Coiled coil</keyword>
<keyword id="KW-0963">Cytoplasm</keyword>
<keyword id="KW-0206">Cytoskeleton</keyword>
<keyword id="KW-0225">Disease variant</keyword>
<keyword id="KW-0995">Kinetochore</keyword>
<keyword id="KW-0498">Mitosis</keyword>
<keyword id="KW-0539">Nucleus</keyword>
<keyword id="KW-0597">Phosphoprotein</keyword>
<keyword id="KW-1267">Proteomics identification</keyword>
<keyword id="KW-1185">Reference proteome</keyword>
<keyword id="KW-0832">Ubl conjugation</keyword>
<protein>
    <recommendedName>
        <fullName evidence="25">Shugoshin 1</fullName>
    </recommendedName>
    <alternativeName>
        <fullName>Serologically defined breast cancer antigen NY-BR-85</fullName>
    </alternativeName>
    <alternativeName>
        <fullName>Shugoshin-like 1</fullName>
    </alternativeName>
</protein>
<reference key="1">
    <citation type="journal article" date="2005" name="PLoS Biol.">
        <title>Shugoshin prevents dissociation of cohesin from centromeres during mitosis in vertebrate cells.</title>
        <authorList>
            <person name="McGuinness B.E."/>
            <person name="Hirota T."/>
            <person name="Kudo N.R."/>
            <person name="Peters J.-M."/>
            <person name="Nasmyth K."/>
        </authorList>
    </citation>
    <scope>NUCLEOTIDE SEQUENCE [MRNA] (ISOFORMS 1; 2; 3; 4; 5; 6 AND 7)</scope>
    <scope>FUNCTION</scope>
    <scope>SUBCELLULAR LOCATION</scope>
</reference>
<reference key="2">
    <citation type="submission" date="2004-08" db="EMBL/GenBank/DDBJ databases">
        <title>Human SgoL1 inhibits precocious separation of sister centromere in early mitosis.</title>
        <authorList>
            <person name="Suzuki H."/>
            <person name="Akiyama N."/>
            <person name="Tsuji M."/>
            <person name="Saito S."/>
            <person name="Eto Y."/>
        </authorList>
    </citation>
    <scope>NUCLEOTIDE SEQUENCE [MRNA] (ISOFORMS 1; 2; 3; 4; 5 AND 6)</scope>
</reference>
<reference key="3">
    <citation type="journal article" date="2004" name="Genome Res.">
        <title>The status, quality, and expansion of the NIH full-length cDNA project: the Mammalian Gene Collection (MGC).</title>
        <authorList>
            <consortium name="The MGC Project Team"/>
        </authorList>
    </citation>
    <scope>NUCLEOTIDE SEQUENCE [LARGE SCALE MRNA] (ISOFORM 3)</scope>
    <scope>NUCLEOTIDE SEQUENCE [LARGE SCALE MRNA] OF 25-561 (ISOFORM 6)</scope>
    <source>
        <tissue>Cervix</tissue>
        <tissue>Lung</tissue>
        <tissue>Mammary gland</tissue>
    </source>
</reference>
<reference key="4">
    <citation type="journal article" date="2001" name="Cancer Immun.">
        <title>Humoral immunity to human breast cancer: antigen definition and quantitative analysis of mRNA expression.</title>
        <authorList>
            <person name="Scanlan M.J."/>
            <person name="Gout I."/>
            <person name="Gordon C.M."/>
            <person name="Williamson B."/>
            <person name="Stockert E."/>
            <person name="Gure A.O."/>
            <person name="Jaeger D."/>
            <person name="Chen Y.-T."/>
            <person name="Mackay A."/>
            <person name="O'Hare M.J."/>
            <person name="Old L.J."/>
        </authorList>
    </citation>
    <scope>NUCLEOTIDE SEQUENCE [MRNA] OF 250-527 (ISOFORM 6)</scope>
    <scope>TISSUE SPECIFICITY</scope>
    <source>
        <tissue>Mammary gland</tissue>
    </source>
</reference>
<reference key="5">
    <citation type="journal article" date="2005" name="Curr. Biol.">
        <title>Human Bub1 defines the persistent cohesion site along the mitotic chromosome by affecting Shugoshin localization.</title>
        <authorList>
            <person name="Kitajima T.S."/>
            <person name="Hauf S."/>
            <person name="Ohsugi M."/>
            <person name="Yamamoto T."/>
            <person name="Watanabe Y."/>
        </authorList>
    </citation>
    <scope>FUNCTION</scope>
    <scope>SUBCELLULAR LOCATION</scope>
    <scope>DEVELOPMENTAL STAGE</scope>
</reference>
<reference key="6">
    <citation type="journal article" date="2004" name="Proc. Natl. Acad. Sci. U.S.A.">
        <title>Human Bub1 protects centromeric sister-chromatid cohesion through Shugoshin during mitosis.</title>
        <authorList>
            <person name="Tang Z."/>
            <person name="Sun Y."/>
            <person name="Harley S.E."/>
            <person name="Zou H."/>
            <person name="Yu H."/>
        </authorList>
    </citation>
    <scope>FUNCTION</scope>
    <scope>SUBCELLULAR LOCATION</scope>
</reference>
<reference key="7">
    <citation type="journal article" date="2006" name="Cell Cycle">
        <title>Differential subcellular localizations of two human Sgo1 isoforms: implications in regulation of sister chromatid cohesion and microtubule dynamics.</title>
        <authorList>
            <person name="Wang X."/>
            <person name="Yang Y."/>
            <person name="Dai W."/>
        </authorList>
    </citation>
    <scope>SUBCELLULAR LOCATION</scope>
    <scope>PHOSPHORYLATION</scope>
</reference>
<reference key="8">
    <citation type="journal article" date="2006" name="Dev. Cell">
        <title>PP2A is required for centromeric localization of Sgo1 and proper chromosome segregation.</title>
        <authorList>
            <person name="Tang Z."/>
            <person name="Shu H."/>
            <person name="Qi W."/>
            <person name="Mahmood N.A."/>
            <person name="Mumby M.C."/>
            <person name="Yu H."/>
        </authorList>
    </citation>
    <scope>FUNCTION</scope>
    <scope>SUBCELLULAR LOCATION</scope>
    <scope>INTERACTION WITH PPP2CA; PPP2R1A AND PPP2R5C</scope>
    <scope>MUTAGENESIS OF ASN-61 AND LYS-492</scope>
</reference>
<reference key="9">
    <citation type="journal article" date="2006" name="Nature">
        <title>Shugoshin collaborates with protein phosphatase 2A to protect cohesin.</title>
        <authorList>
            <person name="Kitajima T.S."/>
            <person name="Sakuno T."/>
            <person name="Ishiguro K."/>
            <person name="Iemura S."/>
            <person name="Natsume T."/>
            <person name="Kawashima S.A."/>
            <person name="Watanabe Y."/>
        </authorList>
    </citation>
    <scope>SUBCELLULAR LOCATION</scope>
    <scope>INTERACTION WITH PPP2CA/PPP2CB; PPP2R1B; PPP2R5A; PPP2R5B; PPP2R5C; PPP2R5D; PPP2R5E; SET; LRRC59; RBM10/RBM5; RPL10A; RPL28; RPL7; RPL7A AND RPLP1</scope>
</reference>
<reference key="10">
    <citation type="journal article" date="2007" name="Cell Cycle">
        <title>Shugoshin 1 plays a central role in kinetochore assembly and is required for kinetochore targeting of Plk1.</title>
        <authorList>
            <person name="Pouwels J."/>
            <person name="Kukkonen A.M."/>
            <person name="Lan W."/>
            <person name="Daum J.R."/>
            <person name="Gorbsky G.J."/>
            <person name="Stukenberg T."/>
            <person name="Kallio M.J."/>
        </authorList>
    </citation>
    <scope>FUNCTION</scope>
    <scope>SUBCELLULAR LOCATION</scope>
    <scope>PHOSPHORYLATION</scope>
</reference>
<reference key="11">
    <citation type="journal article" date="2007" name="Cell Res.">
        <title>Phosphorylation of human Sgo1 by NEK2A is essential for chromosome congression in mitosis.</title>
        <authorList>
            <person name="Fu G."/>
            <person name="Ding X."/>
            <person name="Yuan K."/>
            <person name="Aikhionbare F."/>
            <person name="Yao J."/>
            <person name="Cai X."/>
            <person name="Jiang K."/>
            <person name="Yao X."/>
        </authorList>
    </citation>
    <scope>FUNCTION</scope>
    <scope>SUBCELLULAR LOCATION</scope>
    <scope>INTERACTION WITH NEK2</scope>
    <scope>PHOSPHORYLATION AT SER-14 AND SER-507</scope>
    <scope>MUTAGENESIS OF SER-14 AND SER-507</scope>
</reference>
<reference key="12">
    <citation type="journal article" date="2008" name="Dev. Cell">
        <title>sSgo1, a major splice variant of Sgo1, functions in centriole cohesion where it is regulated by Plk1.</title>
        <authorList>
            <person name="Wang X."/>
            <person name="Yang Y."/>
            <person name="Duan Q."/>
            <person name="Jiang N."/>
            <person name="Huang Y."/>
            <person name="Darzynkiewicz Z."/>
            <person name="Dai W."/>
        </authorList>
    </citation>
    <scope>FUNCTION</scope>
    <scope>SUBCELLULAR LOCATION</scope>
    <scope>INTERACTION WITH PLK1</scope>
    <scope>MUTAGENESIS OF SER-73 AND THR-146</scope>
</reference>
<reference key="13">
    <citation type="journal article" date="2008" name="J. Proteome Res.">
        <title>Combining protein-based IMAC, peptide-based IMAC, and MudPIT for efficient phosphoproteomic analysis.</title>
        <authorList>
            <person name="Cantin G.T."/>
            <person name="Yi W."/>
            <person name="Lu B."/>
            <person name="Park S.K."/>
            <person name="Xu T."/>
            <person name="Lee J.-D."/>
            <person name="Yates J.R. III"/>
        </authorList>
    </citation>
    <scope>PHOSPHORYLATION [LARGE SCALE ANALYSIS] AT SER-436</scope>
    <scope>IDENTIFICATION BY MASS SPECTROMETRY [LARGE SCALE ANALYSIS]</scope>
    <source>
        <tissue>Cervix carcinoma</tissue>
    </source>
</reference>
<reference key="14">
    <citation type="journal article" date="2008" name="Proc. Natl. Acad. Sci. U.S.A.">
        <title>A quantitative atlas of mitotic phosphorylation.</title>
        <authorList>
            <person name="Dephoure N."/>
            <person name="Zhou C."/>
            <person name="Villen J."/>
            <person name="Beausoleil S.A."/>
            <person name="Bakalarski C.E."/>
            <person name="Elledge S.J."/>
            <person name="Gygi S.P."/>
        </authorList>
    </citation>
    <scope>PHOSPHORYLATION [LARGE SCALE ANALYSIS] AT SER-507</scope>
    <scope>IDENTIFICATION BY MASS SPECTROMETRY [LARGE SCALE ANALYSIS]</scope>
    <source>
        <tissue>Cervix carcinoma</tissue>
    </source>
</reference>
<reference key="15">
    <citation type="journal article" date="2009" name="J. Biol. Chem.">
        <title>Multiple anaphase-promoting complex/cyclosome degrons mediate the degradation of human Sgo1.</title>
        <authorList>
            <person name="Karamysheva Z."/>
            <person name="Diaz-Martinez L.A."/>
            <person name="Crow S.E."/>
            <person name="Li B."/>
            <person name="Yu H."/>
        </authorList>
    </citation>
    <scope>UBIQUITINATION</scope>
    <scope>DOMAIN KEN BOX AND D-BOX</scope>
</reference>
<reference key="16">
    <citation type="journal article" date="2010" name="Nature">
        <title>Phosphorylation of the CPC by Cdk1 promotes chromosome bi-orientation.</title>
        <authorList>
            <person name="Tsukahara T."/>
            <person name="Tanno Y."/>
            <person name="Watanabe Y."/>
        </authorList>
    </citation>
    <scope>INTERACTION WITH CDCA8</scope>
    <scope>FUNCTION</scope>
</reference>
<reference key="17">
    <citation type="journal article" date="2010" name="Sci. Signal.">
        <title>Quantitative phosphoproteomics reveals widespread full phosphorylation site occupancy during mitosis.</title>
        <authorList>
            <person name="Olsen J.V."/>
            <person name="Vermeulen M."/>
            <person name="Santamaria A."/>
            <person name="Kumar C."/>
            <person name="Miller M.L."/>
            <person name="Jensen L.J."/>
            <person name="Gnad F."/>
            <person name="Cox J."/>
            <person name="Jensen T.S."/>
            <person name="Nigg E.A."/>
            <person name="Brunak S."/>
            <person name="Mann M."/>
        </authorList>
    </citation>
    <scope>PHOSPHORYLATION [LARGE SCALE ANALYSIS] AT SER-256 AND SER-507</scope>
    <scope>IDENTIFICATION BY MASS SPECTROMETRY [LARGE SCALE ANALYSIS]</scope>
    <source>
        <tissue>Cervix carcinoma</tissue>
    </source>
</reference>
<reference key="18">
    <citation type="journal article" date="2011" name="Sci. Signal.">
        <title>System-wide temporal characterization of the proteome and phosphoproteome of human embryonic stem cell differentiation.</title>
        <authorList>
            <person name="Rigbolt K.T."/>
            <person name="Prokhorova T.A."/>
            <person name="Akimov V."/>
            <person name="Henningsen J."/>
            <person name="Johansen P.T."/>
            <person name="Kratchmarova I."/>
            <person name="Kassem M."/>
            <person name="Mann M."/>
            <person name="Olsen J.V."/>
            <person name="Blagoev B."/>
        </authorList>
    </citation>
    <scope>PHOSPHORYLATION [LARGE SCALE ANALYSIS] AT SER-256</scope>
    <scope>IDENTIFICATION BY MASS SPECTROMETRY [LARGE SCALE ANALYSIS]</scope>
</reference>
<reference key="19">
    <citation type="journal article" date="2013" name="J. Proteome Res.">
        <title>Toward a comprehensive characterization of a human cancer cell phosphoproteome.</title>
        <authorList>
            <person name="Zhou H."/>
            <person name="Di Palma S."/>
            <person name="Preisinger C."/>
            <person name="Peng M."/>
            <person name="Polat A.N."/>
            <person name="Heck A.J."/>
            <person name="Mohammed S."/>
        </authorList>
    </citation>
    <scope>PHOSPHORYLATION [LARGE SCALE ANALYSIS] AT SER-256 AND SER-436</scope>
    <scope>IDENTIFICATION BY MASS SPECTROMETRY [LARGE SCALE ANALYSIS]</scope>
    <source>
        <tissue>Cervix carcinoma</tissue>
        <tissue>Erythroleukemia</tissue>
    </source>
</reference>
<reference key="20">
    <citation type="journal article" date="2019" name="J. Proteome Res.">
        <title>Cell Type-Specific Expression of Testis Elevated Genes Based on Transcriptomics and Antibody-Based Proteomics.</title>
        <authorList>
            <person name="Pineau C."/>
            <person name="Hikmet F."/>
            <person name="Zhang C."/>
            <person name="Oksvold P."/>
            <person name="Chen S."/>
            <person name="Fagerberg L."/>
            <person name="Uhlen M."/>
            <person name="Lindskog C."/>
        </authorList>
    </citation>
    <scope>SUBCELLULAR LOCATION</scope>
</reference>
<reference key="21">
    <citation type="journal article" date="2014" name="Nat. Genet.">
        <title>Mutations in SGOL1 cause a novel cohesinopathy affecting heart and gut rhythm.</title>
        <authorList>
            <consortium name="FORGE Canada Consortium"/>
            <person name="Chetaille P."/>
            <person name="Preuss C."/>
            <person name="Burkhard S."/>
            <person name="Cote J.M."/>
            <person name="Houde C."/>
            <person name="Castilloux J."/>
            <person name="Piche J."/>
            <person name="Gosset N."/>
            <person name="Leclerc S."/>
            <person name="Wuennemann F."/>
            <person name="Thibeault M."/>
            <person name="Gagnon C."/>
            <person name="Galli A."/>
            <person name="Tuck E."/>
            <person name="Hickson G.R."/>
            <person name="El Amine N."/>
            <person name="Boufaied I."/>
            <person name="Lemyre E."/>
            <person name="de Santa Barbara P."/>
            <person name="Faure S."/>
            <person name="Jonzon A."/>
            <person name="Cameron M."/>
            <person name="Dietz H.C."/>
            <person name="Gallo-McFarlane E."/>
            <person name="Benson D.W."/>
            <person name="Moreau C."/>
            <person name="Labuda D."/>
            <person name="Zhan S.H."/>
            <person name="Shen Y."/>
            <person name="Jomphe M."/>
            <person name="Jones S.J."/>
            <person name="Bakkers J."/>
            <person name="Andelfinger G."/>
        </authorList>
    </citation>
    <scope>INVOLVEMENT IN CAID</scope>
    <scope>VARIANT CAID GLU-23</scope>
    <scope>CHARACTERIZATION OF VARIANT CAID GLU-23</scope>
</reference>
<reference key="22">
    <citation type="journal article" date="2011" name="Mol. Biol. Cell">
        <title>Mitotic centromeric targeting of HP1 and its binding to Sgo1 are dispensable for sister-chromatid cohesion in human cells.</title>
        <authorList>
            <person name="Kang J."/>
            <person name="Chaudhary J."/>
            <person name="Dong H."/>
            <person name="Kim S."/>
            <person name="Brautigam C.A."/>
            <person name="Yu H."/>
        </authorList>
    </citation>
    <scope>X-RAY CRYSTALLOGRAPHY (1.93 ANGSTROMS) OF 445-463 IN COMPLEX WITH CBX1</scope>
    <scope>INTERACTION WITH CBX5</scope>
    <scope>MUTAGENESIS OF PRO-451; VAL-453 AND ILE-455</scope>
    <scope>SUBCELLULAR LOCATION</scope>
</reference>
<proteinExistence type="evidence at protein level"/>
<dbReference type="EMBL" id="AB190994">
    <property type="protein sequence ID" value="BAD91318.1"/>
    <property type="molecule type" value="mRNA"/>
</dbReference>
<dbReference type="EMBL" id="AB193056">
    <property type="protein sequence ID" value="BAD95529.1"/>
    <property type="molecule type" value="mRNA"/>
</dbReference>
<dbReference type="EMBL" id="AB193057">
    <property type="protein sequence ID" value="BAD95530.1"/>
    <property type="molecule type" value="mRNA"/>
</dbReference>
<dbReference type="EMBL" id="AB193058">
    <property type="protein sequence ID" value="BAD95531.1"/>
    <property type="molecule type" value="mRNA"/>
</dbReference>
<dbReference type="EMBL" id="AB193059">
    <property type="protein sequence ID" value="BAD95532.1"/>
    <property type="molecule type" value="mRNA"/>
</dbReference>
<dbReference type="EMBL" id="AB193060">
    <property type="protein sequence ID" value="BAD95533.1"/>
    <property type="molecule type" value="mRNA"/>
</dbReference>
<dbReference type="EMBL" id="AB193061">
    <property type="protein sequence ID" value="BAD95534.1"/>
    <property type="molecule type" value="mRNA"/>
</dbReference>
<dbReference type="EMBL" id="AB193062">
    <property type="protein sequence ID" value="BAD95535.1"/>
    <property type="molecule type" value="mRNA"/>
</dbReference>
<dbReference type="EMBL" id="AB193063">
    <property type="protein sequence ID" value="BAD95536.1"/>
    <property type="molecule type" value="mRNA"/>
</dbReference>
<dbReference type="EMBL" id="AB193064">
    <property type="protein sequence ID" value="BAD95537.1"/>
    <property type="molecule type" value="mRNA"/>
</dbReference>
<dbReference type="EMBL" id="AB193065">
    <property type="protein sequence ID" value="BAD95538.1"/>
    <property type="molecule type" value="mRNA"/>
</dbReference>
<dbReference type="EMBL" id="AB193066">
    <property type="protein sequence ID" value="BAD95539.1"/>
    <property type="molecule type" value="mRNA"/>
</dbReference>
<dbReference type="EMBL" id="AB187577">
    <property type="protein sequence ID" value="BAD89587.1"/>
    <property type="molecule type" value="mRNA"/>
</dbReference>
<dbReference type="EMBL" id="AB187578">
    <property type="protein sequence ID" value="BAD89588.1"/>
    <property type="molecule type" value="mRNA"/>
</dbReference>
<dbReference type="EMBL" id="AB187579">
    <property type="protein sequence ID" value="BAD89589.1"/>
    <property type="molecule type" value="mRNA"/>
</dbReference>
<dbReference type="EMBL" id="AB187580">
    <property type="protein sequence ID" value="BAD89590.1"/>
    <property type="molecule type" value="mRNA"/>
</dbReference>
<dbReference type="EMBL" id="AB187581">
    <property type="protein sequence ID" value="BAD89591.1"/>
    <property type="molecule type" value="mRNA"/>
</dbReference>
<dbReference type="EMBL" id="AB187582">
    <property type="protein sequence ID" value="BAD89592.1"/>
    <property type="molecule type" value="mRNA"/>
</dbReference>
<dbReference type="EMBL" id="BC001339">
    <property type="protein sequence ID" value="AAH01339.2"/>
    <property type="status" value="ALT_INIT"/>
    <property type="molecule type" value="mRNA"/>
</dbReference>
<dbReference type="EMBL" id="BC017867">
    <property type="protein sequence ID" value="AAH17867.1"/>
    <property type="molecule type" value="mRNA"/>
</dbReference>
<dbReference type="EMBL" id="BC032696">
    <property type="protein sequence ID" value="AAH32696.1"/>
    <property type="status" value="ALT_INIT"/>
    <property type="molecule type" value="mRNA"/>
</dbReference>
<dbReference type="EMBL" id="AF308299">
    <property type="protein sequence ID" value="AAG48266.1"/>
    <property type="molecule type" value="mRNA"/>
</dbReference>
<dbReference type="CCDS" id="CCDS2635.1">
    <molecule id="Q5FBB7-3"/>
</dbReference>
<dbReference type="CCDS" id="CCDS33716.1">
    <molecule id="Q5FBB7-1"/>
</dbReference>
<dbReference type="CCDS" id="CCDS46771.1">
    <molecule id="Q5FBB7-2"/>
</dbReference>
<dbReference type="CCDS" id="CCDS46772.1">
    <molecule id="Q5FBB7-5"/>
</dbReference>
<dbReference type="CCDS" id="CCDS46773.1">
    <molecule id="Q5FBB7-6"/>
</dbReference>
<dbReference type="CCDS" id="CCDS46774.1">
    <molecule id="Q5FBB7-4"/>
</dbReference>
<dbReference type="CCDS" id="CCDS56243.1">
    <molecule id="Q5FBB7-7"/>
</dbReference>
<dbReference type="RefSeq" id="NP_001012409.1">
    <molecule id="Q5FBB7-6"/>
    <property type="nucleotide sequence ID" value="NM_001012409.4"/>
</dbReference>
<dbReference type="RefSeq" id="NP_001012410.1">
    <molecule id="Q5FBB7-1"/>
    <property type="nucleotide sequence ID" value="NM_001012410.5"/>
</dbReference>
<dbReference type="RefSeq" id="NP_001012411.1">
    <molecule id="Q5FBB7-4"/>
    <property type="nucleotide sequence ID" value="NM_001012411.4"/>
</dbReference>
<dbReference type="RefSeq" id="NP_001012412.1">
    <molecule id="Q5FBB7-2"/>
    <property type="nucleotide sequence ID" value="NM_001012412.5"/>
</dbReference>
<dbReference type="RefSeq" id="NP_001012413.1">
    <molecule id="Q5FBB7-5"/>
    <property type="nucleotide sequence ID" value="NM_001012413.4"/>
</dbReference>
<dbReference type="RefSeq" id="NP_001186180.1">
    <molecule id="Q5FBB7-6"/>
    <property type="nucleotide sequence ID" value="NM_001199251.3"/>
</dbReference>
<dbReference type="RefSeq" id="NP_001186181.1">
    <molecule id="Q5FBB7-1"/>
    <property type="nucleotide sequence ID" value="NM_001199252.3"/>
</dbReference>
<dbReference type="RefSeq" id="NP_001186182.1">
    <molecule id="Q5FBB7-4"/>
    <property type="nucleotide sequence ID" value="NM_001199253.3"/>
</dbReference>
<dbReference type="RefSeq" id="NP_001186183.1">
    <molecule id="Q5FBB7-2"/>
    <property type="nucleotide sequence ID" value="NM_001199254.3"/>
</dbReference>
<dbReference type="RefSeq" id="NP_001186184.1">
    <molecule id="Q5FBB7-5"/>
    <property type="nucleotide sequence ID" value="NM_001199255.3"/>
</dbReference>
<dbReference type="RefSeq" id="NP_001186185.1">
    <molecule id="Q5FBB7-3"/>
    <property type="nucleotide sequence ID" value="NM_001199256.3"/>
</dbReference>
<dbReference type="RefSeq" id="NP_001186186.1">
    <molecule id="Q5FBB7-7"/>
    <property type="nucleotide sequence ID" value="NM_001199257.3"/>
</dbReference>
<dbReference type="RefSeq" id="NP_612493.1">
    <molecule id="Q5FBB7-3"/>
    <property type="nucleotide sequence ID" value="NM_138484.5"/>
</dbReference>
<dbReference type="RefSeq" id="XP_011531675.1">
    <molecule id="Q5FBB7-1"/>
    <property type="nucleotide sequence ID" value="XM_011533373.3"/>
</dbReference>
<dbReference type="RefSeq" id="XP_011531677.1">
    <molecule id="Q5FBB7-1"/>
    <property type="nucleotide sequence ID" value="XM_011533375.3"/>
</dbReference>
<dbReference type="RefSeq" id="XP_011531678.1">
    <molecule id="Q5FBB7-1"/>
    <property type="nucleotide sequence ID" value="XM_011533376.3"/>
</dbReference>
<dbReference type="RefSeq" id="XP_011531679.1">
    <molecule id="Q5FBB7-1"/>
    <property type="nucleotide sequence ID" value="XM_011533377.3"/>
</dbReference>
<dbReference type="RefSeq" id="XP_047303442.1">
    <molecule id="Q5FBB7-2"/>
    <property type="nucleotide sequence ID" value="XM_047447486.1"/>
</dbReference>
<dbReference type="RefSeq" id="XP_047303443.1">
    <molecule id="Q5FBB7-3"/>
    <property type="nucleotide sequence ID" value="XM_047447487.1"/>
</dbReference>
<dbReference type="RefSeq" id="XP_047303444.1">
    <molecule id="Q5FBB7-4"/>
    <property type="nucleotide sequence ID" value="XM_047447488.1"/>
</dbReference>
<dbReference type="RefSeq" id="XP_047303445.1">
    <molecule id="Q5FBB7-5"/>
    <property type="nucleotide sequence ID" value="XM_047447489.1"/>
</dbReference>
<dbReference type="RefSeq" id="XP_047303446.1">
    <molecule id="Q5FBB7-5"/>
    <property type="nucleotide sequence ID" value="XM_047447490.1"/>
</dbReference>
<dbReference type="RefSeq" id="XP_054201299.1">
    <molecule id="Q5FBB7-1"/>
    <property type="nucleotide sequence ID" value="XM_054345324.1"/>
</dbReference>
<dbReference type="RefSeq" id="XP_054201300.1">
    <molecule id="Q5FBB7-1"/>
    <property type="nucleotide sequence ID" value="XM_054345325.1"/>
</dbReference>
<dbReference type="RefSeq" id="XP_054201301.1">
    <molecule id="Q5FBB7-1"/>
    <property type="nucleotide sequence ID" value="XM_054345326.1"/>
</dbReference>
<dbReference type="RefSeq" id="XP_054201302.1">
    <molecule id="Q5FBB7-1"/>
    <property type="nucleotide sequence ID" value="XM_054345327.1"/>
</dbReference>
<dbReference type="RefSeq" id="XP_054201303.1">
    <molecule id="Q5FBB7-2"/>
    <property type="nucleotide sequence ID" value="XM_054345328.1"/>
</dbReference>
<dbReference type="RefSeq" id="XP_054201304.1">
    <molecule id="Q5FBB7-3"/>
    <property type="nucleotide sequence ID" value="XM_054345329.1"/>
</dbReference>
<dbReference type="RefSeq" id="XP_054201305.1">
    <molecule id="Q5FBB7-4"/>
    <property type="nucleotide sequence ID" value="XM_054345330.1"/>
</dbReference>
<dbReference type="RefSeq" id="XP_054201306.1">
    <molecule id="Q5FBB7-5"/>
    <property type="nucleotide sequence ID" value="XM_054345331.1"/>
</dbReference>
<dbReference type="RefSeq" id="XP_054201307.1">
    <molecule id="Q5FBB7-5"/>
    <property type="nucleotide sequence ID" value="XM_054345332.1"/>
</dbReference>
<dbReference type="PDB" id="3FGA">
    <property type="method" value="X-ray"/>
    <property type="resolution" value="2.70 A"/>
    <property type="chains" value="D=51-96"/>
</dbReference>
<dbReference type="PDB" id="3Q6S">
    <property type="method" value="X-ray"/>
    <property type="resolution" value="1.93 A"/>
    <property type="chains" value="E/F=445-463"/>
</dbReference>
<dbReference type="PDB" id="4A0I">
    <property type="method" value="X-ray"/>
    <property type="resolution" value="2.60 A"/>
    <property type="chains" value="C/D=2-6"/>
</dbReference>
<dbReference type="PDB" id="7ZJS">
    <property type="method" value="X-ray"/>
    <property type="resolution" value="3.24 A"/>
    <property type="chains" value="E/F=331-341"/>
</dbReference>
<dbReference type="PDBsum" id="3FGA"/>
<dbReference type="PDBsum" id="3Q6S"/>
<dbReference type="PDBsum" id="4A0I"/>
<dbReference type="PDBsum" id="7ZJS"/>
<dbReference type="SMR" id="Q5FBB7"/>
<dbReference type="BioGRID" id="127395">
    <property type="interactions" value="119"/>
</dbReference>
<dbReference type="DIP" id="DIP-36614N"/>
<dbReference type="FunCoup" id="Q5FBB7">
    <property type="interactions" value="1076"/>
</dbReference>
<dbReference type="IntAct" id="Q5FBB7">
    <property type="interactions" value="70"/>
</dbReference>
<dbReference type="MINT" id="Q5FBB7"/>
<dbReference type="STRING" id="9606.ENSP00000263753"/>
<dbReference type="iPTMnet" id="Q5FBB7"/>
<dbReference type="PhosphoSitePlus" id="Q5FBB7"/>
<dbReference type="BioMuta" id="SGO1"/>
<dbReference type="DMDM" id="74741474"/>
<dbReference type="jPOST" id="Q5FBB7"/>
<dbReference type="MassIVE" id="Q5FBB7"/>
<dbReference type="PaxDb" id="9606-ENSP00000263753"/>
<dbReference type="PeptideAtlas" id="Q5FBB7"/>
<dbReference type="ProteomicsDB" id="62781">
    <molecule id="Q5FBB7-1"/>
</dbReference>
<dbReference type="ProteomicsDB" id="62782">
    <molecule id="Q5FBB7-2"/>
</dbReference>
<dbReference type="ProteomicsDB" id="62783">
    <molecule id="Q5FBB7-3"/>
</dbReference>
<dbReference type="ProteomicsDB" id="62784">
    <molecule id="Q5FBB7-4"/>
</dbReference>
<dbReference type="ProteomicsDB" id="62785">
    <molecule id="Q5FBB7-5"/>
</dbReference>
<dbReference type="ProteomicsDB" id="62786">
    <molecule id="Q5FBB7-6"/>
</dbReference>
<dbReference type="ProteomicsDB" id="62787">
    <molecule id="Q5FBB7-7"/>
</dbReference>
<dbReference type="Pumba" id="Q5FBB7"/>
<dbReference type="Antibodypedia" id="27089">
    <property type="antibodies" value="241 antibodies from 27 providers"/>
</dbReference>
<dbReference type="DNASU" id="151648"/>
<dbReference type="Ensembl" id="ENST00000263753.8">
    <molecule id="Q5FBB7-1"/>
    <property type="protein sequence ID" value="ENSP00000263753.4"/>
    <property type="gene ID" value="ENSG00000129810.15"/>
</dbReference>
<dbReference type="Ensembl" id="ENST00000306698.6">
    <molecule id="Q5FBB7-3"/>
    <property type="protein sequence ID" value="ENSP00000306581.2"/>
    <property type="gene ID" value="ENSG00000129810.15"/>
</dbReference>
<dbReference type="Ensembl" id="ENST00000412997.6">
    <molecule id="Q5FBB7-6"/>
    <property type="protein sequence ID" value="ENSP00000410458.1"/>
    <property type="gene ID" value="ENSG00000129810.15"/>
</dbReference>
<dbReference type="Ensembl" id="ENST00000417364.1">
    <molecule id="Q5FBB7-4"/>
    <property type="protein sequence ID" value="ENSP00000394613.1"/>
    <property type="gene ID" value="ENSG00000129810.15"/>
</dbReference>
<dbReference type="Ensembl" id="ENST00000419233.6">
    <molecule id="Q5FBB7-2"/>
    <property type="protein sequence ID" value="ENSP00000394625.2"/>
    <property type="gene ID" value="ENSG00000129810.15"/>
</dbReference>
<dbReference type="Ensembl" id="ENST00000421451.5">
    <molecule id="Q5FBB7-1"/>
    <property type="protein sequence ID" value="ENSP00000414129.1"/>
    <property type="gene ID" value="ENSG00000129810.15"/>
</dbReference>
<dbReference type="Ensembl" id="ENST00000425061.5">
    <molecule id="Q5FBB7-2"/>
    <property type="protein sequence ID" value="ENSP00000414960.1"/>
    <property type="gene ID" value="ENSG00000129810.15"/>
</dbReference>
<dbReference type="Ensembl" id="ENST00000437051.5">
    <molecule id="Q5FBB7-4"/>
    <property type="protein sequence ID" value="ENSP00000389034.1"/>
    <property type="gene ID" value="ENSG00000129810.15"/>
</dbReference>
<dbReference type="Ensembl" id="ENST00000442720.5">
    <molecule id="Q5FBB7-5"/>
    <property type="protein sequence ID" value="ENSP00000394957.1"/>
    <property type="gene ID" value="ENSG00000129810.15"/>
</dbReference>
<dbReference type="Ensembl" id="ENST00000443724.5">
    <molecule id="Q5FBB7-7"/>
    <property type="protein sequence ID" value="ENSP00000413070.1"/>
    <property type="gene ID" value="ENSG00000129810.15"/>
</dbReference>
<dbReference type="Ensembl" id="ENST00000452020.5">
    <molecule id="Q5FBB7-3"/>
    <property type="protein sequence ID" value="ENSP00000411200.1"/>
    <property type="gene ID" value="ENSG00000129810.15"/>
</dbReference>
<dbReference type="GeneID" id="151648"/>
<dbReference type="KEGG" id="hsa:151648"/>
<dbReference type="MANE-Select" id="ENST00000412997.6">
    <molecule id="Q5FBB7-6"/>
    <property type="protein sequence ID" value="ENSP00000410458.1"/>
    <property type="RefSeq nucleotide sequence ID" value="NM_001199251.3"/>
    <property type="RefSeq protein sequence ID" value="NP_001186180.1"/>
</dbReference>
<dbReference type="UCSC" id="uc003cbr.4">
    <molecule id="Q5FBB7-1"/>
    <property type="organism name" value="human"/>
</dbReference>
<dbReference type="AGR" id="HGNC:25088"/>
<dbReference type="CTD" id="151648"/>
<dbReference type="DisGeNET" id="151648"/>
<dbReference type="GeneCards" id="SGO1"/>
<dbReference type="HGNC" id="HGNC:25088">
    <property type="gene designation" value="SGO1"/>
</dbReference>
<dbReference type="HPA" id="ENSG00000129810">
    <property type="expression patterns" value="Tissue enhanced (bone marrow, lymphoid tissue, testis)"/>
</dbReference>
<dbReference type="MalaCards" id="SGO1"/>
<dbReference type="MIM" id="609168">
    <property type="type" value="gene"/>
</dbReference>
<dbReference type="MIM" id="616201">
    <property type="type" value="phenotype"/>
</dbReference>
<dbReference type="neXtProt" id="NX_Q5FBB7"/>
<dbReference type="OpenTargets" id="ENSG00000129810"/>
<dbReference type="Orphanet" id="435988">
    <property type="disease" value="Chronic atrial and intestinal dysrhythmia syndrome"/>
</dbReference>
<dbReference type="PharmGKB" id="PA134988556"/>
<dbReference type="VEuPathDB" id="HostDB:ENSG00000129810"/>
<dbReference type="eggNOG" id="KOG3575">
    <property type="taxonomic scope" value="Eukaryota"/>
</dbReference>
<dbReference type="GeneTree" id="ENSGT00940000154107"/>
<dbReference type="HOGENOM" id="CLU_1015500_0_0_1"/>
<dbReference type="InParanoid" id="Q5FBB7"/>
<dbReference type="OMA" id="FNNLCQF"/>
<dbReference type="OrthoDB" id="9901374at2759"/>
<dbReference type="PAN-GO" id="Q5FBB7">
    <property type="GO annotations" value="4 GO annotations based on evolutionary models"/>
</dbReference>
<dbReference type="PhylomeDB" id="Q5FBB7"/>
<dbReference type="TreeFam" id="TF334213"/>
<dbReference type="PathwayCommons" id="Q5FBB7"/>
<dbReference type="Reactome" id="R-HSA-141444">
    <property type="pathway name" value="Amplification of signal from unattached kinetochores via a MAD2 inhibitory signal"/>
</dbReference>
<dbReference type="Reactome" id="R-HSA-2467813">
    <property type="pathway name" value="Separation of Sister Chromatids"/>
</dbReference>
<dbReference type="Reactome" id="R-HSA-2500257">
    <property type="pathway name" value="Resolution of Sister Chromatid Cohesion"/>
</dbReference>
<dbReference type="Reactome" id="R-HSA-5663220">
    <property type="pathway name" value="RHO GTPases Activate Formins"/>
</dbReference>
<dbReference type="Reactome" id="R-HSA-68877">
    <property type="pathway name" value="Mitotic Prometaphase"/>
</dbReference>
<dbReference type="Reactome" id="R-HSA-9648025">
    <property type="pathway name" value="EML4 and NUDC in mitotic spindle formation"/>
</dbReference>
<dbReference type="SignaLink" id="Q5FBB7"/>
<dbReference type="SIGNOR" id="Q5FBB7"/>
<dbReference type="BioGRID-ORCS" id="151648">
    <property type="hits" value="712 hits in 1072 CRISPR screens"/>
</dbReference>
<dbReference type="CD-CODE" id="45F3D8EC">
    <property type="entry name" value="Synthetic Condensate 000342"/>
</dbReference>
<dbReference type="CD-CODE" id="8C2F96ED">
    <property type="entry name" value="Centrosome"/>
</dbReference>
<dbReference type="CD-CODE" id="C65B6D56">
    <property type="entry name" value="Synthetic Condensate 000076"/>
</dbReference>
<dbReference type="ChiTaRS" id="SGO1">
    <property type="organism name" value="human"/>
</dbReference>
<dbReference type="EvolutionaryTrace" id="Q5FBB7"/>
<dbReference type="GeneWiki" id="SGOL1"/>
<dbReference type="GenomeRNAi" id="151648"/>
<dbReference type="Pharos" id="Q5FBB7">
    <property type="development level" value="Tbio"/>
</dbReference>
<dbReference type="PRO" id="PR:Q5FBB7"/>
<dbReference type="Proteomes" id="UP000005640">
    <property type="component" value="Chromosome 3"/>
</dbReference>
<dbReference type="RNAct" id="Q5FBB7">
    <property type="molecule type" value="protein"/>
</dbReference>
<dbReference type="Bgee" id="ENSG00000129810">
    <property type="expression patterns" value="Expressed in primordial germ cell in gonad and 105 other cell types or tissues"/>
</dbReference>
<dbReference type="ExpressionAtlas" id="Q5FBB7">
    <property type="expression patterns" value="baseline and differential"/>
</dbReference>
<dbReference type="GO" id="GO:0005813">
    <property type="term" value="C:centrosome"/>
    <property type="evidence" value="ECO:0000314"/>
    <property type="project" value="UniProtKB"/>
</dbReference>
<dbReference type="GO" id="GO:0000775">
    <property type="term" value="C:chromosome, centromeric region"/>
    <property type="evidence" value="ECO:0000314"/>
    <property type="project" value="UniProtKB"/>
</dbReference>
<dbReference type="GO" id="GO:0000779">
    <property type="term" value="C:condensed chromosome, centromeric region"/>
    <property type="evidence" value="ECO:0000314"/>
    <property type="project" value="UniProtKB"/>
</dbReference>
<dbReference type="GO" id="GO:0005829">
    <property type="term" value="C:cytosol"/>
    <property type="evidence" value="ECO:0000314"/>
    <property type="project" value="HPA"/>
</dbReference>
<dbReference type="GO" id="GO:0000776">
    <property type="term" value="C:kinetochore"/>
    <property type="evidence" value="ECO:0000314"/>
    <property type="project" value="HPA"/>
</dbReference>
<dbReference type="GO" id="GO:0016607">
    <property type="term" value="C:nuclear speck"/>
    <property type="evidence" value="ECO:0000314"/>
    <property type="project" value="UniProtKB"/>
</dbReference>
<dbReference type="GO" id="GO:0005654">
    <property type="term" value="C:nucleoplasm"/>
    <property type="evidence" value="ECO:0000314"/>
    <property type="project" value="HPA"/>
</dbReference>
<dbReference type="GO" id="GO:0000922">
    <property type="term" value="C:spindle pole"/>
    <property type="evidence" value="ECO:0000314"/>
    <property type="project" value="UniProtKB"/>
</dbReference>
<dbReference type="GO" id="GO:0019900">
    <property type="term" value="F:kinase binding"/>
    <property type="evidence" value="ECO:0000314"/>
    <property type="project" value="MGI"/>
</dbReference>
<dbReference type="GO" id="GO:0008608">
    <property type="term" value="P:attachment of spindle microtubules to kinetochore"/>
    <property type="evidence" value="ECO:0000314"/>
    <property type="project" value="UniProtKB"/>
</dbReference>
<dbReference type="GO" id="GO:0051301">
    <property type="term" value="P:cell division"/>
    <property type="evidence" value="ECO:0007669"/>
    <property type="project" value="UniProtKB-KW"/>
</dbReference>
<dbReference type="GO" id="GO:0010457">
    <property type="term" value="P:centriole-centriole cohesion"/>
    <property type="evidence" value="ECO:0000314"/>
    <property type="project" value="UniProtKB"/>
</dbReference>
<dbReference type="GO" id="GO:0007059">
    <property type="term" value="P:chromosome segregation"/>
    <property type="evidence" value="ECO:0000314"/>
    <property type="project" value="UniProtKB"/>
</dbReference>
<dbReference type="GO" id="GO:0045132">
    <property type="term" value="P:meiotic chromosome segregation"/>
    <property type="evidence" value="ECO:0000315"/>
    <property type="project" value="MGI"/>
</dbReference>
<dbReference type="GO" id="GO:0071962">
    <property type="term" value="P:mitotic sister chromatid cohesion, centromeric"/>
    <property type="evidence" value="ECO:0000315"/>
    <property type="project" value="UniProtKB"/>
</dbReference>
<dbReference type="FunFam" id="1.20.5.730:FF:000004">
    <property type="entry name" value="SGO1 isoform 1"/>
    <property type="match status" value="1"/>
</dbReference>
<dbReference type="Gene3D" id="1.20.5.730">
    <property type="entry name" value="Single helix bin"/>
    <property type="match status" value="1"/>
</dbReference>
<dbReference type="InterPro" id="IPR038889">
    <property type="entry name" value="Shugoshin1/2"/>
</dbReference>
<dbReference type="InterPro" id="IPR011515">
    <property type="entry name" value="Shugoshin_C"/>
</dbReference>
<dbReference type="InterPro" id="IPR011516">
    <property type="entry name" value="Shugoshin_N"/>
</dbReference>
<dbReference type="PANTHER" id="PTHR21577">
    <property type="entry name" value="SHUGOSHIN"/>
    <property type="match status" value="1"/>
</dbReference>
<dbReference type="PANTHER" id="PTHR21577:SF3">
    <property type="entry name" value="SHUGOSHIN 1-RELATED"/>
    <property type="match status" value="1"/>
</dbReference>
<dbReference type="Pfam" id="PF07557">
    <property type="entry name" value="Shugoshin_C"/>
    <property type="match status" value="1"/>
</dbReference>
<dbReference type="Pfam" id="PF07558">
    <property type="entry name" value="Shugoshin_N"/>
    <property type="match status" value="1"/>
</dbReference>
<feature type="chain" id="PRO_0000055436" description="Shugoshin 1">
    <location>
        <begin position="1"/>
        <end position="561"/>
    </location>
</feature>
<feature type="region of interest" description="Necessary for interaction with PPP2CA and PPP2R1A" evidence="8">
    <location>
        <begin position="1"/>
        <end position="176"/>
    </location>
</feature>
<feature type="region of interest" description="Disordered" evidence="2">
    <location>
        <begin position="260"/>
        <end position="331"/>
    </location>
</feature>
<feature type="region of interest" description="Disordered" evidence="2">
    <location>
        <begin position="348"/>
        <end position="441"/>
    </location>
</feature>
<feature type="coiled-coil region" evidence="1">
    <location>
        <begin position="7"/>
        <end position="89"/>
    </location>
</feature>
<feature type="coiled-coil region" evidence="1">
    <location>
        <begin position="273"/>
        <end position="313"/>
    </location>
</feature>
<feature type="short sequence motif" description="D-box 1">
    <location>
        <begin position="192"/>
        <end position="200"/>
    </location>
</feature>
<feature type="short sequence motif" description="KEN box">
    <location>
        <begin position="310"/>
        <end position="312"/>
    </location>
</feature>
<feature type="short sequence motif" description="D-box 2">
    <location>
        <begin position="438"/>
        <end position="446"/>
    </location>
</feature>
<feature type="short sequence motif" description="PXVXL/I motif" evidence="24">
    <location>
        <begin position="451"/>
        <end position="455"/>
    </location>
</feature>
<feature type="short sequence motif" description="D-box 3">
    <location>
        <begin position="457"/>
        <end position="465"/>
    </location>
</feature>
<feature type="compositionally biased region" description="Basic and acidic residues" evidence="2">
    <location>
        <begin position="267"/>
        <end position="296"/>
    </location>
</feature>
<feature type="compositionally biased region" description="Basic residues" evidence="2">
    <location>
        <begin position="297"/>
        <end position="307"/>
    </location>
</feature>
<feature type="compositionally biased region" description="Basic and acidic residues" evidence="2">
    <location>
        <begin position="308"/>
        <end position="318"/>
    </location>
</feature>
<feature type="compositionally biased region" description="Low complexity" evidence="2">
    <location>
        <begin position="364"/>
        <end position="375"/>
    </location>
</feature>
<feature type="compositionally biased region" description="Polar residues" evidence="2">
    <location>
        <begin position="388"/>
        <end position="398"/>
    </location>
</feature>
<feature type="compositionally biased region" description="Basic and acidic residues" evidence="2">
    <location>
        <begin position="410"/>
        <end position="421"/>
    </location>
</feature>
<feature type="compositionally biased region" description="Low complexity" evidence="2">
    <location>
        <begin position="422"/>
        <end position="433"/>
    </location>
</feature>
<feature type="modified residue" description="Phosphoserine; by NEK2" evidence="11">
    <location>
        <position position="14"/>
    </location>
</feature>
<feature type="modified residue" description="Phosphoserine" evidence="28 29 30">
    <location>
        <position position="256"/>
    </location>
</feature>
<feature type="modified residue" description="Phosphoserine" evidence="26 30">
    <location>
        <position position="436"/>
    </location>
</feature>
<feature type="modified residue" description="Phosphoserine; by NEK2" evidence="11 27 28">
    <location>
        <position position="507"/>
    </location>
</feature>
<feature type="splice variant" id="VSP_016790" description="In isoform 3 and isoform 5." evidence="19 20 21">
    <original>D</original>
    <variation>A</variation>
    <location>
        <position position="159"/>
    </location>
</feature>
<feature type="splice variant" id="VSP_016791" description="In isoform 3 and isoform 5." evidence="19 20 21">
    <location>
        <begin position="160"/>
        <end position="428"/>
    </location>
</feature>
<feature type="splice variant" id="VSP_016792" description="In isoform 2 and isoform 4." evidence="20 21">
    <original>G</original>
    <variation>A</variation>
    <location>
        <position position="176"/>
    </location>
</feature>
<feature type="splice variant" id="VSP_016793" description="In isoform 7." evidence="20">
    <location>
        <begin position="177"/>
        <end position="522"/>
    </location>
</feature>
<feature type="splice variant" id="VSP_016794" description="In isoform 2 and isoform 4." evidence="20 21">
    <location>
        <begin position="177"/>
        <end position="428"/>
    </location>
</feature>
<feature type="splice variant" id="VSP_016795" description="In isoform 4, isoform 5 and isoform 6." evidence="18 19 20 21">
    <original>RALEVSPAKEAIFILYYVREFVSRFPDCRKCKLETHICLR</original>
    <variation>SMKQIQ</variation>
    <location>
        <begin position="522"/>
        <end position="561"/>
    </location>
</feature>
<feature type="sequence variant" id="VAR_072709" description="In CAID; patient fibroblasts exhibit significantly faster cell proliferation than controls; during mitosis the mutant protein is localized in an ordered fashion around the centromeres but display a rather homogeneous cytoplasmic localization pattern; dbSNP:rs199815268." evidence="16">
    <original>K</original>
    <variation>E</variation>
    <location>
        <position position="23"/>
    </location>
</feature>
<feature type="sequence variant" id="VAR_051968" description="In dbSNP:rs6806241.">
    <original>V</original>
    <variation>A</variation>
    <location>
        <position position="171"/>
    </location>
</feature>
<feature type="sequence variant" id="VAR_051969" description="In dbSNP:rs9868701.">
    <original>Q</original>
    <variation>P</variation>
    <location>
        <position position="322"/>
    </location>
</feature>
<feature type="mutagenesis site" description="Loss of phosphorylation and presence of misaligned chromosomes; when associated with A-507." evidence="11">
    <original>S</original>
    <variation>A</variation>
    <location>
        <position position="14"/>
    </location>
</feature>
<feature type="mutagenesis site" description="Loss of interaction with PPP2CA and PPP2R1A and loss of centromeric localization." evidence="8">
    <original>N</original>
    <variation>I</variation>
    <location>
        <position position="61"/>
    </location>
</feature>
<feature type="mutagenesis site" description="Loss of proper localization to spindle pole and mitotic spindle. Significant increase in split spindle poles." evidence="12">
    <original>S</original>
    <variation>A</variation>
    <location>
        <position position="73"/>
    </location>
</feature>
<feature type="mutagenesis site" description="Loss of proper localization to spindle pole and mitotic spindle. Significant increase in split spindle poles." evidence="12">
    <original>T</original>
    <variation>A</variation>
    <location>
        <position position="146"/>
    </location>
</feature>
<feature type="mutagenesis site" description="Disrupts interaction with CBX5, loss of localization to centromeres in interphase, no effect on localization to centromeres in mitosis; when associated with A-453 and A-455." evidence="15">
    <original>P</original>
    <variation>A</variation>
    <location>
        <position position="451"/>
    </location>
</feature>
<feature type="mutagenesis site" description="Disrupts interaction with CBX5, loss of localization to centromeres in interphase, no effect on localization to centromeres in mitosis; when associated with A-451 and A-455." evidence="15">
    <original>V</original>
    <variation>A</variation>
    <location>
        <position position="453"/>
    </location>
</feature>
<feature type="mutagenesis site" description="Disrupts interaction with CBX5, loss of localization to centromeres in interphase, no effect on localization to centromeres in mitosis; when associated with A-451 and A-453." evidence="15">
    <original>I</original>
    <variation>A</variation>
    <location>
        <position position="455"/>
    </location>
</feature>
<feature type="mutagenesis site" description="Loss of centromeric localization." evidence="8">
    <original>K</original>
    <variation>A</variation>
    <location>
        <position position="492"/>
    </location>
</feature>
<feature type="mutagenesis site" description="Loss of phosphorylation; and presence of misaligned chromosomes; when associated with A-14." evidence="11">
    <original>S</original>
    <variation>A</variation>
    <location>
        <position position="507"/>
    </location>
</feature>
<feature type="helix" evidence="31">
    <location>
        <begin position="51"/>
        <end position="93"/>
    </location>
</feature>
<feature type="strand" evidence="33">
    <location>
        <begin position="333"/>
        <end position="335"/>
    </location>
</feature>
<feature type="helix" evidence="33">
    <location>
        <begin position="337"/>
        <end position="339"/>
    </location>
</feature>
<feature type="strand" evidence="32">
    <location>
        <begin position="448"/>
        <end position="455"/>
    </location>
</feature>
<organism>
    <name type="scientific">Homo sapiens</name>
    <name type="common">Human</name>
    <dbReference type="NCBI Taxonomy" id="9606"/>
    <lineage>
        <taxon>Eukaryota</taxon>
        <taxon>Metazoa</taxon>
        <taxon>Chordata</taxon>
        <taxon>Craniata</taxon>
        <taxon>Vertebrata</taxon>
        <taxon>Euteleostomi</taxon>
        <taxon>Mammalia</taxon>
        <taxon>Eutheria</taxon>
        <taxon>Euarchontoglires</taxon>
        <taxon>Primates</taxon>
        <taxon>Haplorrhini</taxon>
        <taxon>Catarrhini</taxon>
        <taxon>Hominidae</taxon>
        <taxon>Homo</taxon>
    </lineage>
</organism>
<sequence length="561" mass="64190">MAKERCLKKSFQDSLEDIKKRMKEKRNKNLAEIGKRRSFIAAPCQIITNTSTLLKNYQDNNKMLVLALENEKSKVKEAQDIILQLRKECYYLTCQLYALKGKLTSQQTVEPAQNQEICSSGMDPNSDDSSRNLFVKDLPQIPLEETELPGQGESFQIEDQIPTIPQDTLGVDFDSGEAKSTDNVLPRTVSVRSSLKKHCNSICQFDSLDDFETSHLAGKSFEFERVGFLDPLVNMHIPENVQHNACQWSKDQVNLSPKLIQPGTFTKTKEDILESKSEQTKSKQRDTQERKREEKRKANRRKSKRMSKYKENKSENKKTVPQKKMHKSVSSNDAYNFNLEEGVHLTPFRQKVSNDSNREENNESEVSLCESSGSGDDSDDLYLPTCKYIQNPTSNSDRPVTRPLAKRALKYTDEKETEGSKPTKTPTTTPPETQQSPHLSLKDITNVSLYPVVKIRRLSLSPKKNKASPAVALPKRRCTASVNYKEPTLASKLRRGDPFTDLCFLNSPIFKQKKDLRRSKKRALEVSPAKEAIFILYYVREFVSRFPDCRKCKLETHICLR</sequence>
<gene>
    <name evidence="25" type="primary">SGO1</name>
    <name type="synonym">SGOL1</name>
</gene>
<accession>Q5FBB7</accession>
<accession>Q588H5</accession>
<accession>Q5FBB4</accession>
<accession>Q5FBB5</accession>
<accession>Q5FBB6</accession>
<accession>Q5FBB8</accession>
<accession>Q8N579</accession>
<accession>Q8WVL0</accession>
<accession>Q9BVA8</accession>
<accession>Q9H275</accession>
<comment type="function">
    <text evidence="4 5 6 8 10 11 12 14">Plays a central role in chromosome cohesion during mitosis by preventing premature dissociation of cohesin complex from centromeres after prophase, when most of cohesin complex dissociates from chromosomes arms. May act by preventing phosphorylation of the STAG2 subunit of cohesin complex at the centromere, ensuring cohesin persistence at centromere until cohesin cleavage by ESPL1/separase at anaphase. Essential for proper chromosome segregation during mitosis and this function requires interaction with PPP2R1A. Its phosphorylated form is necessary for chromosome congression and for the proper attachment of spindle microtubule to the kinetochore. Necessary for kinetochore localization of PLK1 and CENPF. May play a role in the tension sensing mechanism of the spindle-assembly checkpoint by regulating PLK1 kinetochore affinity. Isoform 3 plays a role in maintaining centriole cohesion involved in controlling spindle pole integrity. Involved in centromeric enrichment of AUKRB in prometaphase.</text>
</comment>
<comment type="subunit">
    <text evidence="7 8 11 12 14">Interacts with PPP2CA (or PPP2CB), PPP2R1B, PPP2R5A, PPP2R5B, PPP2R5C, PPP2R5D, PPP2R5E, SET, LRRC59, RBM10 (or RBM5), RPL10A, RPL28, RPL7, RPL7A and RPLP1. Interaction with protein phosphatase 2A occurs most probably through direct binding to the regulatory B56 subunits: PPP2R1B, PPP2R5A, PPP2R5B, PPP2R5C, PPP2R5D, PPP2R5E. Interacts with PPP2R1A and NEK2. Isoform 3 interacts with PLK1. Interacts with CDCA8.</text>
</comment>
<comment type="interaction">
    <interactant intactId="EBI-989069">
        <id>Q5FBB7</id>
    </interactant>
    <interactant intactId="EBI-78129">
        <id>P83916</id>
        <label>CBX1</label>
    </interactant>
    <organismsDiffer>false</organismsDiffer>
    <experiments>2</experiments>
</comment>
<comment type="interaction">
    <interactant intactId="EBI-989069">
        <id>Q5FBB7</id>
    </interactant>
    <interactant intactId="EBI-78219">
        <id>P45973</id>
        <label>CBX5</label>
    </interactant>
    <organismsDiffer>false</organismsDiffer>
    <experiments>4</experiments>
</comment>
<comment type="interaction">
    <interactant intactId="EBI-989069">
        <id>Q5FBB7</id>
    </interactant>
    <interactant intactId="EBI-718805">
        <id>Q96FF9</id>
        <label>CDCA5</label>
    </interactant>
    <organismsDiffer>false</organismsDiffer>
    <experiments>4</experiments>
</comment>
<comment type="interaction">
    <interactant intactId="EBI-989069">
        <id>Q5FBB7</id>
    </interactant>
    <interactant intactId="EBI-979174">
        <id>Q53HL2</id>
        <label>CDCA8</label>
    </interactant>
    <organismsDiffer>false</organismsDiffer>
    <experiments>3</experiments>
</comment>
<comment type="interaction">
    <interactant intactId="EBI-989069">
        <id>Q5FBB7</id>
    </interactant>
    <interactant intactId="EBI-712311">
        <id>P67775</id>
        <label>PPP2CA</label>
    </interactant>
    <organismsDiffer>false</organismsDiffer>
    <experiments>7</experiments>
</comment>
<comment type="interaction">
    <interactant intactId="EBI-989069">
        <id>Q5FBB7</id>
    </interactant>
    <interactant intactId="EBI-641666">
        <id>Q15172</id>
        <label>PPP2R5A</label>
    </interactant>
    <organismsDiffer>false</organismsDiffer>
    <experiments>5</experiments>
</comment>
<comment type="interaction">
    <interactant intactId="EBI-989069">
        <id>Q5FBB7</id>
    </interactant>
    <interactant intactId="EBI-396563">
        <id>Q14738</id>
        <label>PPP2R5D</label>
    </interactant>
    <organismsDiffer>false</organismsDiffer>
    <experiments>4</experiments>
</comment>
<comment type="interaction">
    <interactant intactId="EBI-989069">
        <id>Q5FBB7</id>
    </interactant>
    <interactant intactId="EBI-80690">
        <id>Q14683</id>
        <label>SMC1A</label>
    </interactant>
    <organismsDiffer>false</organismsDiffer>
    <experiments>9</experiments>
</comment>
<comment type="interaction">
    <interactant intactId="EBI-989069">
        <id>Q5FBB7</id>
    </interactant>
    <interactant intactId="EBI-1057252">
        <id>Q8N3U4</id>
        <label>STAG2</label>
    </interactant>
    <organismsDiffer>false</organismsDiffer>
    <experiments>7</experiments>
</comment>
<comment type="subcellular location">
    <subcellularLocation>
        <location evidence="23">Nucleus</location>
    </subcellularLocation>
    <subcellularLocation>
        <location evidence="4 5 7 8 15">Chromosome</location>
        <location evidence="4 5 7 8 15">Centromere</location>
    </subcellularLocation>
    <subcellularLocation>
        <location evidence="9 10 11">Chromosome</location>
        <location evidence="9 10 11">Centromere</location>
        <location evidence="9 10 11">Kinetochore</location>
    </subcellularLocation>
    <subcellularLocation>
        <location evidence="9 12">Cytoplasm</location>
        <location evidence="9 12">Cytoskeleton</location>
        <location evidence="9 12">Spindle pole</location>
    </subcellularLocation>
    <subcellularLocation>
        <location evidence="12">Cytoplasm</location>
        <location evidence="12">Cytoskeleton</location>
        <location evidence="12">Microtubule organizing center</location>
        <location evidence="12">Centrosome</location>
    </subcellularLocation>
    <subcellularLocation>
        <location evidence="17">Nucleus speckle</location>
    </subcellularLocation>
    <text evidence="4 7 8 9 10 11">Localizes to the inner centromere throughout prophase until metaphase and disappears at anaphase (PubMed:16541025). Centromeric localization requires the presence of BUB1 and the interaction with PPP2R1A (PubMed:15604152, PubMed:16541025, PubMed:16580887). Colocalizes with NEK2 at the kinetochore (PubMed:17621308). Colocalizes with and SS18L1 at the kinetochore (PubMed:16582621). Phosphorylation by AUKRB and the presence of BUB1 are required for localization to the kinetochore (PubMed:17617734). Isoform 1 primarily localizes to kinetochores during G2 phase and mitotic prophase, metaphase, and anaphase and does not appear to be associated with kinetochores during late mitosis (PubMed:16582621). Isoform 3 is found at the centrosome in interphase and at spindle poles in mitosis and its spindle pole localization is PLK1 dependent (PubMed:16582621). Isoform 3 does not localize to kinetochores during any stages of the cell cycle (PubMed:16582621).</text>
</comment>
<comment type="alternative products">
    <event type="alternative splicing"/>
    <isoform>
        <id>Q5FBB7-1</id>
        <name>1</name>
        <name>1EF</name>
        <name>SgoL1-A2</name>
        <sequence type="displayed"/>
    </isoform>
    <isoform>
        <id>Q5FBB7-2</id>
        <name>2</name>
        <name>1GH</name>
        <name>SgoL1-B2</name>
        <sequence type="described" ref="VSP_016792 VSP_016794"/>
    </isoform>
    <isoform>
        <id>Q5FBB7-3</id>
        <name>3</name>
        <name>1KL</name>
        <name>sSGO1</name>
        <name>SgoL1-C2</name>
        <sequence type="described" ref="VSP_016790 VSP_016791"/>
    </isoform>
    <isoform>
        <id>Q5FBB7-4</id>
        <name>4</name>
        <name>1CD</name>
        <name>SgoL1-B1</name>
        <sequence type="described" ref="VSP_016792 VSP_016794 VSP_016795"/>
    </isoform>
    <isoform>
        <id>Q5FBB7-5</id>
        <name>5</name>
        <name>1AB</name>
        <name>SgoL1-C1</name>
        <sequence type="described" ref="VSP_016790 VSP_016791 VSP_016795"/>
    </isoform>
    <isoform>
        <id>Q5FBB7-6</id>
        <name>6</name>
        <name>1AB</name>
        <name>SgoL1-A1</name>
        <sequence type="described" ref="VSP_016795"/>
    </isoform>
    <isoform>
        <id>Q5FBB7-7</id>
        <name>7</name>
        <name>1J</name>
        <sequence type="described" ref="VSP_016793"/>
    </isoform>
</comment>
<comment type="tissue specificity">
    <text evidence="3">Widely expressed. Highly expressed in testis. Expressed in lung, small intestine, breast, liver and placenta. Strongly overexpressed in 90% of breast cancers tested.</text>
</comment>
<comment type="developmental stage">
    <text evidence="5">Appears in prophase cells and remains present until metaphase. Strongly decreases at the onset of anaphase and completely disappears at telophase. Not present in interphase cells (at protein level).</text>
</comment>
<comment type="domain">
    <text evidence="13">The KEN box and D-box 3 are required for its ubiquitination and degradation.</text>
</comment>
<comment type="PTM">
    <text evidence="13">Ubiquitinated and degraded during mitotic exit by APC/C-Cdh1.</text>
</comment>
<comment type="PTM">
    <text evidence="9 10 11">Phosphorylation by NEK2 is essential for chromosome congression in mitosis and for the proper attachment of spindle microtubule to the kinetochore. Phosphorylated by PLK1 and AUKRB.</text>
</comment>
<comment type="disease" evidence="16">
    <disease id="DI-04314">
        <name>Chronic atrial and intestinal dysrhythmia</name>
        <acronym>CAID</acronym>
        <description>A disease characterized by dysregulation of the cardiac sinus node resulting in sick sinus syndrome, in association with chronic intestinal pseudo-obstruction, a disorder of gastrointestinal motility in which intestinal obstruction occurs in the absence of a mechanical obstacle.</description>
        <dbReference type="MIM" id="616201"/>
    </disease>
    <text>The disease is caused by variants affecting the gene represented in this entry.</text>
</comment>
<comment type="miscellaneous">
    <text>Shugoshin is Japanese for guardian spirit (as it is known to be a protector of centromeric cohesin).</text>
</comment>
<comment type="similarity">
    <text evidence="22">Belongs to the shugoshin family.</text>
</comment>
<comment type="sequence caution" evidence="22">
    <conflict type="erroneous initiation">
        <sequence resource="EMBL-CDS" id="AAH01339"/>
    </conflict>
    <text>Extended N-terminus.</text>
</comment>
<comment type="sequence caution" evidence="22">
    <conflict type="erroneous initiation">
        <sequence resource="EMBL-CDS" id="AAH32696"/>
    </conflict>
    <text>Truncated N-terminus.</text>
</comment>
<evidence type="ECO:0000255" key="1"/>
<evidence type="ECO:0000256" key="2">
    <source>
        <dbReference type="SAM" id="MobiDB-lite"/>
    </source>
</evidence>
<evidence type="ECO:0000269" key="3">
    <source>
    </source>
</evidence>
<evidence type="ECO:0000269" key="4">
    <source>
    </source>
</evidence>
<evidence type="ECO:0000269" key="5">
    <source>
    </source>
</evidence>
<evidence type="ECO:0000269" key="6">
    <source>
    </source>
</evidence>
<evidence type="ECO:0000269" key="7">
    <source>
    </source>
</evidence>
<evidence type="ECO:0000269" key="8">
    <source>
    </source>
</evidence>
<evidence type="ECO:0000269" key="9">
    <source>
    </source>
</evidence>
<evidence type="ECO:0000269" key="10">
    <source>
    </source>
</evidence>
<evidence type="ECO:0000269" key="11">
    <source>
    </source>
</evidence>
<evidence type="ECO:0000269" key="12">
    <source>
    </source>
</evidence>
<evidence type="ECO:0000269" key="13">
    <source>
    </source>
</evidence>
<evidence type="ECO:0000269" key="14">
    <source>
    </source>
</evidence>
<evidence type="ECO:0000269" key="15">
    <source>
    </source>
</evidence>
<evidence type="ECO:0000269" key="16">
    <source>
    </source>
</evidence>
<evidence type="ECO:0000269" key="17">
    <source>
    </source>
</evidence>
<evidence type="ECO:0000303" key="18">
    <source>
    </source>
</evidence>
<evidence type="ECO:0000303" key="19">
    <source>
    </source>
</evidence>
<evidence type="ECO:0000303" key="20">
    <source>
    </source>
</evidence>
<evidence type="ECO:0000303" key="21">
    <source ref="2"/>
</evidence>
<evidence type="ECO:0000305" key="22"/>
<evidence type="ECO:0000305" key="23">
    <source>
    </source>
</evidence>
<evidence type="ECO:0000305" key="24">
    <source>
    </source>
</evidence>
<evidence type="ECO:0000312" key="25">
    <source>
        <dbReference type="HGNC" id="HGNC:25088"/>
    </source>
</evidence>
<evidence type="ECO:0007744" key="26">
    <source>
    </source>
</evidence>
<evidence type="ECO:0007744" key="27">
    <source>
    </source>
</evidence>
<evidence type="ECO:0007744" key="28">
    <source>
    </source>
</evidence>
<evidence type="ECO:0007744" key="29">
    <source>
    </source>
</evidence>
<evidence type="ECO:0007744" key="30">
    <source>
    </source>
</evidence>
<evidence type="ECO:0007829" key="31">
    <source>
        <dbReference type="PDB" id="3FGA"/>
    </source>
</evidence>
<evidence type="ECO:0007829" key="32">
    <source>
        <dbReference type="PDB" id="3Q6S"/>
    </source>
</evidence>
<evidence type="ECO:0007829" key="33">
    <source>
        <dbReference type="PDB" id="7ZJS"/>
    </source>
</evidence>
<name>SGO1_HUMAN</name>